<evidence type="ECO:0000255" key="1">
    <source>
        <dbReference type="HAMAP-Rule" id="MF_00111"/>
    </source>
</evidence>
<reference key="1">
    <citation type="journal article" date="2008" name="J. Bacteriol.">
        <title>Genome sequence of the chemolithoautotrophic bacterium Oligotropha carboxidovorans OM5T.</title>
        <authorList>
            <person name="Paul D."/>
            <person name="Bridges S."/>
            <person name="Burgess S.C."/>
            <person name="Dandass Y."/>
            <person name="Lawrence M.L."/>
        </authorList>
    </citation>
    <scope>NUCLEOTIDE SEQUENCE [LARGE SCALE GENOMIC DNA]</scope>
    <source>
        <strain>ATCC 49405 / DSM 1227 / KCTC 32145 / OM5</strain>
    </source>
</reference>
<reference key="2">
    <citation type="journal article" date="2011" name="J. Bacteriol.">
        <title>Complete genome sequences of the chemolithoautotrophic Oligotropha carboxidovorans strains OM4 and OM5.</title>
        <authorList>
            <person name="Volland S."/>
            <person name="Rachinger M."/>
            <person name="Strittmatter A."/>
            <person name="Daniel R."/>
            <person name="Gottschalk G."/>
            <person name="Meyer O."/>
        </authorList>
    </citation>
    <scope>NUCLEOTIDE SEQUENCE [LARGE SCALE GENOMIC DNA]</scope>
    <source>
        <strain>ATCC 49405 / DSM 1227 / KCTC 32145 / OM5</strain>
    </source>
</reference>
<comment type="function">
    <text evidence="1">Cell wall formation. Adds enolpyruvyl to UDP-N-acetylglucosamine.</text>
</comment>
<comment type="catalytic activity">
    <reaction evidence="1">
        <text>phosphoenolpyruvate + UDP-N-acetyl-alpha-D-glucosamine = UDP-N-acetyl-3-O-(1-carboxyvinyl)-alpha-D-glucosamine + phosphate</text>
        <dbReference type="Rhea" id="RHEA:18681"/>
        <dbReference type="ChEBI" id="CHEBI:43474"/>
        <dbReference type="ChEBI" id="CHEBI:57705"/>
        <dbReference type="ChEBI" id="CHEBI:58702"/>
        <dbReference type="ChEBI" id="CHEBI:68483"/>
        <dbReference type="EC" id="2.5.1.7"/>
    </reaction>
</comment>
<comment type="pathway">
    <text evidence="1">Cell wall biogenesis; peptidoglycan biosynthesis.</text>
</comment>
<comment type="subcellular location">
    <subcellularLocation>
        <location evidence="1">Cytoplasm</location>
    </subcellularLocation>
</comment>
<comment type="similarity">
    <text evidence="1">Belongs to the EPSP synthase family. MurA subfamily.</text>
</comment>
<gene>
    <name evidence="1" type="primary">murA</name>
    <name type="ordered locus">OCAR_4728</name>
    <name type="ordered locus">OCA5_c32220</name>
</gene>
<organism>
    <name type="scientific">Afipia carboxidovorans (strain ATCC 49405 / DSM 1227 / KCTC 32145 / OM5)</name>
    <name type="common">Oligotropha carboxidovorans</name>
    <dbReference type="NCBI Taxonomy" id="504832"/>
    <lineage>
        <taxon>Bacteria</taxon>
        <taxon>Pseudomonadati</taxon>
        <taxon>Pseudomonadota</taxon>
        <taxon>Alphaproteobacteria</taxon>
        <taxon>Hyphomicrobiales</taxon>
        <taxon>Nitrobacteraceae</taxon>
        <taxon>Afipia</taxon>
    </lineage>
</organism>
<accession>B6JDF7</accession>
<accession>F8BRY3</accession>
<dbReference type="EC" id="2.5.1.7" evidence="1"/>
<dbReference type="EMBL" id="CP001196">
    <property type="protein sequence ID" value="ACI91869.1"/>
    <property type="molecule type" value="Genomic_DNA"/>
</dbReference>
<dbReference type="EMBL" id="CP002826">
    <property type="protein sequence ID" value="AEI07899.1"/>
    <property type="molecule type" value="Genomic_DNA"/>
</dbReference>
<dbReference type="RefSeq" id="WP_012561899.1">
    <property type="nucleotide sequence ID" value="NC_015684.1"/>
</dbReference>
<dbReference type="SMR" id="B6JDF7"/>
<dbReference type="STRING" id="504832.OCA5_c32220"/>
<dbReference type="KEGG" id="oca:OCAR_4728"/>
<dbReference type="KEGG" id="ocg:OCA5_c32220"/>
<dbReference type="PATRIC" id="fig|504832.7.peg.3387"/>
<dbReference type="eggNOG" id="COG0766">
    <property type="taxonomic scope" value="Bacteria"/>
</dbReference>
<dbReference type="HOGENOM" id="CLU_027387_0_0_5"/>
<dbReference type="OrthoDB" id="9803760at2"/>
<dbReference type="UniPathway" id="UPA00219"/>
<dbReference type="Proteomes" id="UP000007730">
    <property type="component" value="Chromosome"/>
</dbReference>
<dbReference type="GO" id="GO:0005737">
    <property type="term" value="C:cytoplasm"/>
    <property type="evidence" value="ECO:0007669"/>
    <property type="project" value="UniProtKB-SubCell"/>
</dbReference>
<dbReference type="GO" id="GO:0008760">
    <property type="term" value="F:UDP-N-acetylglucosamine 1-carboxyvinyltransferase activity"/>
    <property type="evidence" value="ECO:0007669"/>
    <property type="project" value="UniProtKB-UniRule"/>
</dbReference>
<dbReference type="GO" id="GO:0051301">
    <property type="term" value="P:cell division"/>
    <property type="evidence" value="ECO:0007669"/>
    <property type="project" value="UniProtKB-KW"/>
</dbReference>
<dbReference type="GO" id="GO:0071555">
    <property type="term" value="P:cell wall organization"/>
    <property type="evidence" value="ECO:0007669"/>
    <property type="project" value="UniProtKB-KW"/>
</dbReference>
<dbReference type="GO" id="GO:0009252">
    <property type="term" value="P:peptidoglycan biosynthetic process"/>
    <property type="evidence" value="ECO:0007669"/>
    <property type="project" value="UniProtKB-UniRule"/>
</dbReference>
<dbReference type="GO" id="GO:0008360">
    <property type="term" value="P:regulation of cell shape"/>
    <property type="evidence" value="ECO:0007669"/>
    <property type="project" value="UniProtKB-KW"/>
</dbReference>
<dbReference type="GO" id="GO:0019277">
    <property type="term" value="P:UDP-N-acetylgalactosamine biosynthetic process"/>
    <property type="evidence" value="ECO:0007669"/>
    <property type="project" value="InterPro"/>
</dbReference>
<dbReference type="CDD" id="cd01555">
    <property type="entry name" value="UdpNAET"/>
    <property type="match status" value="1"/>
</dbReference>
<dbReference type="FunFam" id="3.65.10.10:FF:000001">
    <property type="entry name" value="UDP-N-acetylglucosamine 1-carboxyvinyltransferase"/>
    <property type="match status" value="1"/>
</dbReference>
<dbReference type="Gene3D" id="3.65.10.10">
    <property type="entry name" value="Enolpyruvate transferase domain"/>
    <property type="match status" value="2"/>
</dbReference>
<dbReference type="HAMAP" id="MF_00111">
    <property type="entry name" value="MurA"/>
    <property type="match status" value="1"/>
</dbReference>
<dbReference type="InterPro" id="IPR001986">
    <property type="entry name" value="Enolpyruvate_Tfrase_dom"/>
</dbReference>
<dbReference type="InterPro" id="IPR036968">
    <property type="entry name" value="Enolpyruvate_Tfrase_sf"/>
</dbReference>
<dbReference type="InterPro" id="IPR050068">
    <property type="entry name" value="MurA_subfamily"/>
</dbReference>
<dbReference type="InterPro" id="IPR013792">
    <property type="entry name" value="RNA3'P_cycl/enolpyr_Trfase_a/b"/>
</dbReference>
<dbReference type="InterPro" id="IPR005750">
    <property type="entry name" value="UDP_GlcNAc_COvinyl_MurA"/>
</dbReference>
<dbReference type="NCBIfam" id="TIGR01072">
    <property type="entry name" value="murA"/>
    <property type="match status" value="1"/>
</dbReference>
<dbReference type="NCBIfam" id="NF006873">
    <property type="entry name" value="PRK09369.1"/>
    <property type="match status" value="1"/>
</dbReference>
<dbReference type="PANTHER" id="PTHR43783">
    <property type="entry name" value="UDP-N-ACETYLGLUCOSAMINE 1-CARBOXYVINYLTRANSFERASE"/>
    <property type="match status" value="1"/>
</dbReference>
<dbReference type="PANTHER" id="PTHR43783:SF1">
    <property type="entry name" value="UDP-N-ACETYLGLUCOSAMINE 1-CARBOXYVINYLTRANSFERASE"/>
    <property type="match status" value="1"/>
</dbReference>
<dbReference type="Pfam" id="PF00275">
    <property type="entry name" value="EPSP_synthase"/>
    <property type="match status" value="1"/>
</dbReference>
<dbReference type="SUPFAM" id="SSF55205">
    <property type="entry name" value="EPT/RTPC-like"/>
    <property type="match status" value="1"/>
</dbReference>
<keyword id="KW-0131">Cell cycle</keyword>
<keyword id="KW-0132">Cell division</keyword>
<keyword id="KW-0133">Cell shape</keyword>
<keyword id="KW-0961">Cell wall biogenesis/degradation</keyword>
<keyword id="KW-0963">Cytoplasm</keyword>
<keyword id="KW-0573">Peptidoglycan synthesis</keyword>
<keyword id="KW-0670">Pyruvate</keyword>
<keyword id="KW-1185">Reference proteome</keyword>
<keyword id="KW-0808">Transferase</keyword>
<proteinExistence type="inferred from homology"/>
<feature type="chain" id="PRO_1000094705" description="UDP-N-acetylglucosamine 1-carboxyvinyltransferase">
    <location>
        <begin position="1"/>
        <end position="429"/>
    </location>
</feature>
<feature type="active site" description="Proton donor" evidence="1">
    <location>
        <position position="126"/>
    </location>
</feature>
<feature type="binding site" evidence="1">
    <location>
        <begin position="22"/>
        <end position="23"/>
    </location>
    <ligand>
        <name>phosphoenolpyruvate</name>
        <dbReference type="ChEBI" id="CHEBI:58702"/>
    </ligand>
</feature>
<feature type="binding site" evidence="1">
    <location>
        <position position="102"/>
    </location>
    <ligand>
        <name>UDP-N-acetyl-alpha-D-glucosamine</name>
        <dbReference type="ChEBI" id="CHEBI:57705"/>
    </ligand>
</feature>
<feature type="binding site" evidence="1">
    <location>
        <begin position="131"/>
        <end position="135"/>
    </location>
    <ligand>
        <name>UDP-N-acetyl-alpha-D-glucosamine</name>
        <dbReference type="ChEBI" id="CHEBI:57705"/>
    </ligand>
</feature>
<feature type="binding site" evidence="1">
    <location>
        <position position="316"/>
    </location>
    <ligand>
        <name>UDP-N-acetyl-alpha-D-glucosamine</name>
        <dbReference type="ChEBI" id="CHEBI:57705"/>
    </ligand>
</feature>
<feature type="binding site" evidence="1">
    <location>
        <position position="338"/>
    </location>
    <ligand>
        <name>UDP-N-acetyl-alpha-D-glucosamine</name>
        <dbReference type="ChEBI" id="CHEBI:57705"/>
    </ligand>
</feature>
<feature type="modified residue" description="2-(S-cysteinyl)pyruvic acid O-phosphothioketal" evidence="1">
    <location>
        <position position="126"/>
    </location>
</feature>
<sequence length="429" mass="45307">MDRIRIVGGNKLNGTIPISGAKNAALPLMIAALLTDETLILENVPRLADVALLQRILGNHGVDIMSAGKRPGDREHQGQTLHISAANIIDTTAPYDLVSKMRASFWVIGPLLARMKEANVSLPGGCAIGTRPVDLLIMALEKLGAEIVIDGGYAVARAPQGLHGAEIEFPKVTVSGTHVALMAATLAKGTTVITNAACEPEIADVADCLNKMGAKITGAGTSRIVIEGVEKLHGARHAVLPDRIEAGTYAMAVAMTGGDVQLQGARPELMQAALDVLIEAGATITQTNEGIRVQRNGSGIRPVDVSTSPFPGFPTDLQAQLMALMTRAEGSSRITETIFENRFMHVQELARFGARIALDGETATIEGRPKLRGAPVMATDLRASVSLVIAALAAEGETMVNRIYHLDRGFERLEDKLSACGATIERISG</sequence>
<protein>
    <recommendedName>
        <fullName evidence="1">UDP-N-acetylglucosamine 1-carboxyvinyltransferase</fullName>
        <ecNumber evidence="1">2.5.1.7</ecNumber>
    </recommendedName>
    <alternativeName>
        <fullName evidence="1">Enoylpyruvate transferase</fullName>
    </alternativeName>
    <alternativeName>
        <fullName evidence="1">UDP-N-acetylglucosamine enolpyruvyl transferase</fullName>
        <shortName evidence="1">EPT</shortName>
    </alternativeName>
</protein>
<name>MURA_AFIC5</name>